<keyword id="KW-0460">Magnesium</keyword>
<keyword id="KW-0479">Metal-binding</keyword>
<keyword id="KW-1185">Reference proteome</keyword>
<keyword id="KW-0808">Transferase</keyword>
<evidence type="ECO:0000250" key="1"/>
<evidence type="ECO:0000269" key="2">
    <source>
    </source>
</evidence>
<evidence type="ECO:0000305" key="3"/>
<proteinExistence type="evidence at protein level"/>
<dbReference type="EC" id="2.5.1.105"/>
<dbReference type="EMBL" id="L77117">
    <property type="protein sequence ID" value="AAB98288.1"/>
    <property type="molecule type" value="Genomic_DNA"/>
</dbReference>
<dbReference type="PIR" id="F64337">
    <property type="entry name" value="F64337"/>
</dbReference>
<dbReference type="RefSeq" id="WP_010869799.1">
    <property type="nucleotide sequence ID" value="NC_000909.1"/>
</dbReference>
<dbReference type="SMR" id="Q57749"/>
<dbReference type="FunCoup" id="Q57749">
    <property type="interactions" value="110"/>
</dbReference>
<dbReference type="STRING" id="243232.MJ_0301"/>
<dbReference type="PaxDb" id="243232-MJ_0301"/>
<dbReference type="EnsemblBacteria" id="AAB98288">
    <property type="protein sequence ID" value="AAB98288"/>
    <property type="gene ID" value="MJ_0301"/>
</dbReference>
<dbReference type="GeneID" id="1451156"/>
<dbReference type="KEGG" id="mja:MJ_0301"/>
<dbReference type="eggNOG" id="arCOG00503">
    <property type="taxonomic scope" value="Archaea"/>
</dbReference>
<dbReference type="HOGENOM" id="CLU_036012_0_0_2"/>
<dbReference type="InParanoid" id="Q57749"/>
<dbReference type="OrthoDB" id="7773at2157"/>
<dbReference type="PhylomeDB" id="Q57749"/>
<dbReference type="BioCyc" id="MetaCyc:MONOMER-14570"/>
<dbReference type="BRENDA" id="2.5.1.105">
    <property type="organism ID" value="3260"/>
</dbReference>
<dbReference type="UniPathway" id="UPA00065"/>
<dbReference type="Proteomes" id="UP000000805">
    <property type="component" value="Chromosome"/>
</dbReference>
<dbReference type="GO" id="GO:0102041">
    <property type="term" value="F:7,8-dihydropterin-6-yl-methyl-4-(beta-D-ribofuranosyl)aminobenzene 5'-phosphate synthase"/>
    <property type="evidence" value="ECO:0007669"/>
    <property type="project" value="UniProtKB-EC"/>
</dbReference>
<dbReference type="GO" id="GO:0046872">
    <property type="term" value="F:metal ion binding"/>
    <property type="evidence" value="ECO:0007669"/>
    <property type="project" value="UniProtKB-KW"/>
</dbReference>
<dbReference type="GO" id="GO:0016740">
    <property type="term" value="F:transferase activity"/>
    <property type="evidence" value="ECO:0000318"/>
    <property type="project" value="GO_Central"/>
</dbReference>
<dbReference type="GO" id="GO:0016765">
    <property type="term" value="F:transferase activity, transferring alkyl or aryl (other than methyl) groups"/>
    <property type="evidence" value="ECO:0000314"/>
    <property type="project" value="UniProtKB"/>
</dbReference>
<dbReference type="GO" id="GO:1901285">
    <property type="term" value="P:5,6,7,8-tetrahydromethanopterin biosynthetic process"/>
    <property type="evidence" value="ECO:0000314"/>
    <property type="project" value="UniProtKB"/>
</dbReference>
<dbReference type="GO" id="GO:0042558">
    <property type="term" value="P:pteridine-containing compound metabolic process"/>
    <property type="evidence" value="ECO:0000314"/>
    <property type="project" value="UniProtKB"/>
</dbReference>
<dbReference type="CDD" id="cd07713">
    <property type="entry name" value="DHPS-like_MBL-fold"/>
    <property type="match status" value="1"/>
</dbReference>
<dbReference type="Gene3D" id="3.60.15.10">
    <property type="entry name" value="Ribonuclease Z/Hydroxyacylglutathione hydrolase-like"/>
    <property type="match status" value="1"/>
</dbReference>
<dbReference type="InterPro" id="IPR041712">
    <property type="entry name" value="DHPS-like_MBL-fold"/>
</dbReference>
<dbReference type="InterPro" id="IPR001279">
    <property type="entry name" value="Metallo-B-lactamas"/>
</dbReference>
<dbReference type="InterPro" id="IPR052926">
    <property type="entry name" value="Metallo-beta-lactamase_dom"/>
</dbReference>
<dbReference type="InterPro" id="IPR036866">
    <property type="entry name" value="RibonucZ/Hydroxyglut_hydro"/>
</dbReference>
<dbReference type="PANTHER" id="PTHR13754:SF18">
    <property type="entry name" value="7,8-DIHYDROPTERIN-6-METHYL-4-(BETA-D-RIBOFURANOSYL)-AMINOBENZENE-5'-PHOSPHATE SYNTHASE"/>
    <property type="match status" value="1"/>
</dbReference>
<dbReference type="PANTHER" id="PTHR13754">
    <property type="entry name" value="METALLO-BETA-LACTAMASE SUPERFAMILY PROTEIN"/>
    <property type="match status" value="1"/>
</dbReference>
<dbReference type="Pfam" id="PF00753">
    <property type="entry name" value="Lactamase_B"/>
    <property type="match status" value="1"/>
</dbReference>
<dbReference type="SMART" id="SM00849">
    <property type="entry name" value="Lactamase_B"/>
    <property type="match status" value="1"/>
</dbReference>
<dbReference type="SUPFAM" id="SSF56281">
    <property type="entry name" value="Metallo-hydrolase/oxidoreductase"/>
    <property type="match status" value="1"/>
</dbReference>
<name>DHPSL_METJA</name>
<protein>
    <recommendedName>
        <fullName>7,8-dihydropterin-6-methyl-4-(beta-D-ribofuranosyl)-aminobenzene-5'-phosphate synthase</fullName>
        <ecNumber>2.5.1.105</ecNumber>
    </recommendedName>
</protein>
<organism>
    <name type="scientific">Methanocaldococcus jannaschii (strain ATCC 43067 / DSM 2661 / JAL-1 / JCM 10045 / NBRC 100440)</name>
    <name type="common">Methanococcus jannaschii</name>
    <dbReference type="NCBI Taxonomy" id="243232"/>
    <lineage>
        <taxon>Archaea</taxon>
        <taxon>Methanobacteriati</taxon>
        <taxon>Methanobacteriota</taxon>
        <taxon>Methanomada group</taxon>
        <taxon>Methanococci</taxon>
        <taxon>Methanococcales</taxon>
        <taxon>Methanocaldococcaceae</taxon>
        <taxon>Methanocaldococcus</taxon>
    </lineage>
</organism>
<reference key="1">
    <citation type="journal article" date="1996" name="Science">
        <title>Complete genome sequence of the methanogenic archaeon, Methanococcus jannaschii.</title>
        <authorList>
            <person name="Bult C.J."/>
            <person name="White O."/>
            <person name="Olsen G.J."/>
            <person name="Zhou L."/>
            <person name="Fleischmann R.D."/>
            <person name="Sutton G.G."/>
            <person name="Blake J.A."/>
            <person name="FitzGerald L.M."/>
            <person name="Clayton R.A."/>
            <person name="Gocayne J.D."/>
            <person name="Kerlavage A.R."/>
            <person name="Dougherty B.A."/>
            <person name="Tomb J.-F."/>
            <person name="Adams M.D."/>
            <person name="Reich C.I."/>
            <person name="Overbeek R."/>
            <person name="Kirkness E.F."/>
            <person name="Weinstock K.G."/>
            <person name="Merrick J.M."/>
            <person name="Glodek A."/>
            <person name="Scott J.L."/>
            <person name="Geoghagen N.S.M."/>
            <person name="Weidman J.F."/>
            <person name="Fuhrmann J.L."/>
            <person name="Nguyen D."/>
            <person name="Utterback T.R."/>
            <person name="Kelley J.M."/>
            <person name="Peterson J.D."/>
            <person name="Sadow P.W."/>
            <person name="Hanna M.C."/>
            <person name="Cotton M.D."/>
            <person name="Roberts K.M."/>
            <person name="Hurst M.A."/>
            <person name="Kaine B.P."/>
            <person name="Borodovsky M."/>
            <person name="Klenk H.-P."/>
            <person name="Fraser C.M."/>
            <person name="Smith H.O."/>
            <person name="Woese C.R."/>
            <person name="Venter J.C."/>
        </authorList>
    </citation>
    <scope>NUCLEOTIDE SEQUENCE [LARGE SCALE GENOMIC DNA]</scope>
    <source>
        <strain>ATCC 43067 / DSM 2661 / JAL-1 / JCM 10045 / NBRC 100440</strain>
    </source>
</reference>
<reference key="2">
    <citation type="journal article" date="1999" name="Nat. Struct. Biol.">
        <title>Identifying two ancient enzymes in Archaea using predicted secondary structure alignment.</title>
        <authorList>
            <person name="Xu H."/>
            <person name="Aurora R."/>
            <person name="Rose G.D."/>
            <person name="White R.H."/>
        </authorList>
    </citation>
    <scope>FUNCTION AS A PTEROATE SYNTHASE</scope>
    <scope>CATALYTIC ACTIVITY</scope>
    <scope>SUBSTRATE SPECIFICITY</scope>
    <source>
        <strain>ATCC 43067 / DSM 2661 / JAL-1 / JCM 10045 / NBRC 100440</strain>
    </source>
</reference>
<feature type="chain" id="PRO_0000106783" description="7,8-dihydropterin-6-methyl-4-(beta-D-ribofuranosyl)-aminobenzene-5'-phosphate synthase">
    <location>
        <begin position="1"/>
        <end position="294"/>
    </location>
</feature>
<feature type="binding site" evidence="1">
    <location>
        <position position="116"/>
    </location>
    <ligand>
        <name>substrate</name>
    </ligand>
</feature>
<feature type="binding site" evidence="1">
    <location>
        <position position="186"/>
    </location>
    <ligand>
        <name>substrate</name>
    </ligand>
</feature>
<feature type="binding site" evidence="1">
    <location>
        <position position="228"/>
    </location>
    <ligand>
        <name>substrate</name>
    </ligand>
</feature>
<feature type="binding site" evidence="1">
    <location>
        <position position="265"/>
    </location>
    <ligand>
        <name>substrate</name>
    </ligand>
</feature>
<comment type="function">
    <text evidence="2">Catalyzes the condensation of 6-hydroxymethyl-7,8-dihydropterin pyrophosphate (DHPP) with 4-(beta-D-ribofuranosyl)-aminobenzene-5'-phosphate (beta-RFA-P) to form 7,8-dihydropterin-6-methyl-4-(beta-D-ribofuranosyl)-aminobenzene-5'-phosphate, a precursor in the biosynthesis of 5,6,7,8-tetrahydromethanopterin (H4MPT). To a lesser extent, is able to condense beta-RFA-P with another arylamine, 1-(4-aminophenyl)-1-deoxy-D-ribitol (APDR), to form 7,8-dihydropterin-6-methyl-1-(4-aminophenyl)-1-deoxy-D-ribitol. Dephosphorylated beta-RFA-P is not a substrate.</text>
</comment>
<comment type="catalytic activity">
    <reaction evidence="2">
        <text>4-(beta-D-ribofuranosyl)aminobenzene 5'-phosphate + (7,8-dihydropterin-6-yl)methyl diphosphate = N-[(7,8-dihydropterin-6-yl)methyl]-4-(beta-D-ribofuranosyl)aniline 5'-phosphate + diphosphate</text>
        <dbReference type="Rhea" id="RHEA:35951"/>
        <dbReference type="ChEBI" id="CHEBI:33019"/>
        <dbReference type="ChEBI" id="CHEBI:72778"/>
        <dbReference type="ChEBI" id="CHEBI:72950"/>
        <dbReference type="ChEBI" id="CHEBI:72951"/>
        <dbReference type="EC" id="2.5.1.105"/>
    </reaction>
</comment>
<comment type="cofactor">
    <cofactor evidence="1">
        <name>Mg(2+)</name>
        <dbReference type="ChEBI" id="CHEBI:18420"/>
    </cofactor>
</comment>
<comment type="pathway">
    <text>Cofactor biosynthesis; 5,6,7,8-tetrahydromethanopterin biosynthesis.</text>
</comment>
<comment type="similarity">
    <text evidence="3">Belongs to the metallo-beta-lactamase superfamily.</text>
</comment>
<gene>
    <name type="ordered locus">MJ0301</name>
</gene>
<accession>Q57749</accession>
<sequence length="294" mass="33076">MLMNIGKVDNIKIYTLAEDYAGYNSPFWSQHGLSFLIEVESNGIKKRILFDTATYAEPILFNMKLLNINPKSIDMIILSHNHFDHTGGLFGIMKEINKEIPIFAHPNIFKVSFATEPEFMLAGTLNKTLKEDIEKLGGRWVLSRDPIRLMPGIFTLGEIEDEEKINFEKKPTIGLYKLENGRVVLDNVEDEIGLAIVTEKGLIIVSGCSHPGIVSMVKKSIKISGINKVYAVIGGFHLIDADNERIVSTIKALKKLGVKKICTGHCTGFKAENMFMEEFKEDFERLHAGKIIKF</sequence>